<gene>
    <name type="primary">rps2e</name>
    <name type="ordered locus">TV0482</name>
    <name type="ORF">TVG0468673</name>
</gene>
<proteinExistence type="inferred from homology"/>
<comment type="similarity">
    <text evidence="1">Belongs to the eukaryotic ribosomal protein eS24 family.</text>
</comment>
<protein>
    <recommendedName>
        <fullName evidence="1">Small ribosomal subunit protein eS24</fullName>
    </recommendedName>
    <alternativeName>
        <fullName evidence="2">30S ribosomal protein S24e</fullName>
    </alternativeName>
</protein>
<accession>Q97BH3</accession>
<sequence length="99" mass="11602">MVELVITEKRDNPILKRKELKYTLKFENARTPSREEIKEIIAKHEGAQKELIIVESNKQLTGKHEIVGYTKIYQDKASAMLYEPDYELIRNGLKQKEAK</sequence>
<name>RS24_THEVO</name>
<reference key="1">
    <citation type="journal article" date="2000" name="Proc. Natl. Acad. Sci. U.S.A.">
        <title>Archaeal adaptation to higher temperatures revealed by genomic sequence of Thermoplasma volcanium.</title>
        <authorList>
            <person name="Kawashima T."/>
            <person name="Amano N."/>
            <person name="Koike H."/>
            <person name="Makino S."/>
            <person name="Higuchi S."/>
            <person name="Kawashima-Ohya Y."/>
            <person name="Watanabe K."/>
            <person name="Yamazaki M."/>
            <person name="Kanehori K."/>
            <person name="Kawamoto T."/>
            <person name="Nunoshiba T."/>
            <person name="Yamamoto Y."/>
            <person name="Aramaki H."/>
            <person name="Makino K."/>
            <person name="Suzuki M."/>
        </authorList>
    </citation>
    <scope>NUCLEOTIDE SEQUENCE [LARGE SCALE GENOMIC DNA]</scope>
    <source>
        <strain>ATCC 51530 / DSM 4299 / JCM 9571 / NBRC 15438 / GSS1</strain>
    </source>
</reference>
<evidence type="ECO:0000255" key="1">
    <source>
        <dbReference type="HAMAP-Rule" id="MF_00545"/>
    </source>
</evidence>
<evidence type="ECO:0000305" key="2"/>
<feature type="chain" id="PRO_0000137659" description="Small ribosomal subunit protein eS24">
    <location>
        <begin position="1"/>
        <end position="99"/>
    </location>
</feature>
<dbReference type="EMBL" id="BA000011">
    <property type="protein sequence ID" value="BAB59624.1"/>
    <property type="molecule type" value="Genomic_DNA"/>
</dbReference>
<dbReference type="RefSeq" id="WP_010916741.1">
    <property type="nucleotide sequence ID" value="NC_002689.2"/>
</dbReference>
<dbReference type="SMR" id="Q97BH3"/>
<dbReference type="STRING" id="273116.gene:9381264"/>
<dbReference type="PaxDb" id="273116-14324697"/>
<dbReference type="GeneID" id="1440999"/>
<dbReference type="KEGG" id="tvo:TVG0468673"/>
<dbReference type="eggNOG" id="arCOG04182">
    <property type="taxonomic scope" value="Archaea"/>
</dbReference>
<dbReference type="HOGENOM" id="CLU_107248_3_1_2"/>
<dbReference type="OrthoDB" id="27533at2157"/>
<dbReference type="PhylomeDB" id="Q97BH3"/>
<dbReference type="Proteomes" id="UP000001017">
    <property type="component" value="Chromosome"/>
</dbReference>
<dbReference type="GO" id="GO:1990904">
    <property type="term" value="C:ribonucleoprotein complex"/>
    <property type="evidence" value="ECO:0007669"/>
    <property type="project" value="UniProtKB-KW"/>
</dbReference>
<dbReference type="GO" id="GO:0005840">
    <property type="term" value="C:ribosome"/>
    <property type="evidence" value="ECO:0007669"/>
    <property type="project" value="UniProtKB-KW"/>
</dbReference>
<dbReference type="GO" id="GO:0003735">
    <property type="term" value="F:structural constituent of ribosome"/>
    <property type="evidence" value="ECO:0007669"/>
    <property type="project" value="InterPro"/>
</dbReference>
<dbReference type="GO" id="GO:0006412">
    <property type="term" value="P:translation"/>
    <property type="evidence" value="ECO:0007669"/>
    <property type="project" value="UniProtKB-UniRule"/>
</dbReference>
<dbReference type="Gene3D" id="3.30.70.330">
    <property type="match status" value="1"/>
</dbReference>
<dbReference type="HAMAP" id="MF_00545">
    <property type="entry name" value="Ribosomal_eS24"/>
    <property type="match status" value="1"/>
</dbReference>
<dbReference type="InterPro" id="IPR012677">
    <property type="entry name" value="Nucleotide-bd_a/b_plait_sf"/>
</dbReference>
<dbReference type="InterPro" id="IPR001976">
    <property type="entry name" value="Ribosomal_eS24"/>
</dbReference>
<dbReference type="InterPro" id="IPR018098">
    <property type="entry name" value="Ribosomal_eS24_CS"/>
</dbReference>
<dbReference type="InterPro" id="IPR012678">
    <property type="entry name" value="Ribosomal_uL23/eL15/eS24_sf"/>
</dbReference>
<dbReference type="Pfam" id="PF01282">
    <property type="entry name" value="Ribosomal_S24e"/>
    <property type="match status" value="1"/>
</dbReference>
<dbReference type="SUPFAM" id="SSF54189">
    <property type="entry name" value="Ribosomal proteins S24e, L23 and L15e"/>
    <property type="match status" value="1"/>
</dbReference>
<dbReference type="PROSITE" id="PS00529">
    <property type="entry name" value="RIBOSOMAL_S24E"/>
    <property type="match status" value="1"/>
</dbReference>
<keyword id="KW-0687">Ribonucleoprotein</keyword>
<keyword id="KW-0689">Ribosomal protein</keyword>
<organism>
    <name type="scientific">Thermoplasma volcanium (strain ATCC 51530 / DSM 4299 / JCM 9571 / NBRC 15438 / GSS1)</name>
    <dbReference type="NCBI Taxonomy" id="273116"/>
    <lineage>
        <taxon>Archaea</taxon>
        <taxon>Methanobacteriati</taxon>
        <taxon>Thermoplasmatota</taxon>
        <taxon>Thermoplasmata</taxon>
        <taxon>Thermoplasmatales</taxon>
        <taxon>Thermoplasmataceae</taxon>
        <taxon>Thermoplasma</taxon>
    </lineage>
</organism>